<gene>
    <name evidence="6" type="primary">FLZ7</name>
    <name evidence="5" type="synonym">DUF581-13</name>
    <name evidence="8" type="ordered locus">At4g39795</name>
    <name evidence="9" type="ORF">T19P19</name>
    <name evidence="10" type="ORF">T5J17</name>
</gene>
<sequence length="126" mass="14104">MLLGNRPRPQMQRTASITRITIEVDGDQTAGQDSDVSMTVVDGGENYAQRFLSPVNHQRNERKYGGRSSPSSFLVNCGFCKRGLAPGRDIYMYKGDAAFCSIECREQQMEHDEGKTRNRVVLSPSK</sequence>
<feature type="chain" id="PRO_0000445498" description="FCS-Like Zinc finger 7">
    <location>
        <begin position="1"/>
        <end position="126"/>
    </location>
</feature>
<feature type="zinc finger region" description="FLZ-type" evidence="1">
    <location>
        <begin position="72"/>
        <end position="116"/>
    </location>
</feature>
<keyword id="KW-0963">Cytoplasm</keyword>
<keyword id="KW-0479">Metal-binding</keyword>
<keyword id="KW-0539">Nucleus</keyword>
<keyword id="KW-1185">Reference proteome</keyword>
<keyword id="KW-0862">Zinc</keyword>
<keyword id="KW-0863">Zinc-finger</keyword>
<organism>
    <name type="scientific">Arabidopsis thaliana</name>
    <name type="common">Mouse-ear cress</name>
    <dbReference type="NCBI Taxonomy" id="3702"/>
    <lineage>
        <taxon>Eukaryota</taxon>
        <taxon>Viridiplantae</taxon>
        <taxon>Streptophyta</taxon>
        <taxon>Embryophyta</taxon>
        <taxon>Tracheophyta</taxon>
        <taxon>Spermatophyta</taxon>
        <taxon>Magnoliopsida</taxon>
        <taxon>eudicotyledons</taxon>
        <taxon>Gunneridae</taxon>
        <taxon>Pentapetalae</taxon>
        <taxon>rosids</taxon>
        <taxon>malvids</taxon>
        <taxon>Brassicales</taxon>
        <taxon>Brassicaceae</taxon>
        <taxon>Camelineae</taxon>
        <taxon>Arabidopsis</taxon>
    </lineage>
</organism>
<proteinExistence type="evidence at protein level"/>
<comment type="function">
    <text evidence="2">May act as an adapter to facilitate the interaction of SnRK1 complex with effector proteins, conferring tissue- and stimulus-type specific differences in the SnRK1 regulation pathway.</text>
</comment>
<comment type="subunit">
    <text evidence="2 4">Interacts with KIN10 and KIN11 via its FLZ-type zinc finger domain (PubMed:24600465, PubMed:29945970). Interacts with KINB3 via its N-terminal part (PubMed:29945970). Forms homodimer and heterodimer with FLZ1, FLZ2 and FLZ15 in vitro (PubMed:29945970).</text>
</comment>
<comment type="subcellular location">
    <subcellularLocation>
        <location evidence="4">Cytoplasm</location>
    </subcellularLocation>
    <subcellularLocation>
        <location evidence="4">Nucleus</location>
    </subcellularLocation>
</comment>
<comment type="induction">
    <text evidence="3">Down-regulated by glucose, sucrose and mannose.</text>
</comment>
<comment type="similarity">
    <text evidence="7">Belongs to the FLZ family.</text>
</comment>
<comment type="sequence caution" evidence="7">
    <conflict type="erroneous initiation">
        <sequence resource="EMBL-CDS" id="AAY17404"/>
    </conflict>
    <text>Extended N-terminus.</text>
</comment>
<comment type="sequence caution" evidence="7">
    <conflict type="erroneous initiation">
        <sequence resource="EMBL-CDS" id="AAY57309"/>
    </conflict>
    <text>Extended N-terminus.</text>
</comment>
<dbReference type="EMBL" id="AL022605">
    <property type="status" value="NOT_ANNOTATED_CDS"/>
    <property type="molecule type" value="Genomic_DNA"/>
</dbReference>
<dbReference type="EMBL" id="AL035708">
    <property type="status" value="NOT_ANNOTATED_CDS"/>
    <property type="molecule type" value="Genomic_DNA"/>
</dbReference>
<dbReference type="EMBL" id="AL161595">
    <property type="status" value="NOT_ANNOTATED_CDS"/>
    <property type="molecule type" value="Genomic_DNA"/>
</dbReference>
<dbReference type="EMBL" id="AL161596">
    <property type="status" value="NOT_ANNOTATED_CDS"/>
    <property type="molecule type" value="Genomic_DNA"/>
</dbReference>
<dbReference type="EMBL" id="CP002687">
    <property type="protein sequence ID" value="AEE87120.1"/>
    <property type="molecule type" value="Genomic_DNA"/>
</dbReference>
<dbReference type="EMBL" id="BT021967">
    <property type="protein sequence ID" value="AAY17404.1"/>
    <property type="status" value="ALT_INIT"/>
    <property type="molecule type" value="mRNA"/>
</dbReference>
<dbReference type="EMBL" id="BT023470">
    <property type="protein sequence ID" value="AAY57309.1"/>
    <property type="status" value="ALT_INIT"/>
    <property type="molecule type" value="mRNA"/>
</dbReference>
<dbReference type="RefSeq" id="NP_680776.2">
    <property type="nucleotide sequence ID" value="NM_148410.3"/>
</dbReference>
<dbReference type="STRING" id="3702.F4JW68"/>
<dbReference type="PaxDb" id="3702-AT4G39795.1"/>
<dbReference type="EnsemblPlants" id="AT4G39795.1">
    <property type="protein sequence ID" value="AT4G39795.1"/>
    <property type="gene ID" value="AT4G39795"/>
</dbReference>
<dbReference type="GeneID" id="830138"/>
<dbReference type="Gramene" id="AT4G39795.1">
    <property type="protein sequence ID" value="AT4G39795.1"/>
    <property type="gene ID" value="AT4G39795"/>
</dbReference>
<dbReference type="KEGG" id="ath:AT4G39795"/>
<dbReference type="Araport" id="AT4G39795"/>
<dbReference type="TAIR" id="AT4G39795"/>
<dbReference type="eggNOG" id="ENOG502R1MU">
    <property type="taxonomic scope" value="Eukaryota"/>
</dbReference>
<dbReference type="HOGENOM" id="CLU_085535_1_0_1"/>
<dbReference type="InParanoid" id="F4JW68"/>
<dbReference type="OMA" id="MEHDEGK"/>
<dbReference type="PRO" id="PR:F4JW68"/>
<dbReference type="Proteomes" id="UP000006548">
    <property type="component" value="Chromosome 4"/>
</dbReference>
<dbReference type="ExpressionAtlas" id="F4JW68">
    <property type="expression patterns" value="baseline and differential"/>
</dbReference>
<dbReference type="GO" id="GO:0005737">
    <property type="term" value="C:cytoplasm"/>
    <property type="evidence" value="ECO:0000314"/>
    <property type="project" value="UniProtKB"/>
</dbReference>
<dbReference type="GO" id="GO:0005634">
    <property type="term" value="C:nucleus"/>
    <property type="evidence" value="ECO:0000314"/>
    <property type="project" value="UniProtKB"/>
</dbReference>
<dbReference type="GO" id="GO:0019900">
    <property type="term" value="F:kinase binding"/>
    <property type="evidence" value="ECO:0000353"/>
    <property type="project" value="UniProtKB"/>
</dbReference>
<dbReference type="GO" id="GO:0008270">
    <property type="term" value="F:zinc ion binding"/>
    <property type="evidence" value="ECO:0007669"/>
    <property type="project" value="UniProtKB-KW"/>
</dbReference>
<dbReference type="GO" id="GO:0009749">
    <property type="term" value="P:response to glucose"/>
    <property type="evidence" value="ECO:0000270"/>
    <property type="project" value="UniProtKB"/>
</dbReference>
<dbReference type="GO" id="GO:1905582">
    <property type="term" value="P:response to mannose"/>
    <property type="evidence" value="ECO:0000270"/>
    <property type="project" value="UniProtKB"/>
</dbReference>
<dbReference type="GO" id="GO:0009744">
    <property type="term" value="P:response to sucrose"/>
    <property type="evidence" value="ECO:0000270"/>
    <property type="project" value="UniProtKB"/>
</dbReference>
<dbReference type="InterPro" id="IPR007650">
    <property type="entry name" value="Zf-FLZ_dom"/>
</dbReference>
<dbReference type="PANTHER" id="PTHR33059">
    <property type="entry name" value="FCS-LIKE ZINC FINGER 5"/>
    <property type="match status" value="1"/>
</dbReference>
<dbReference type="PANTHER" id="PTHR33059:SF76">
    <property type="entry name" value="FCS-LIKE ZINC FINGER 7"/>
    <property type="match status" value="1"/>
</dbReference>
<dbReference type="Pfam" id="PF04570">
    <property type="entry name" value="zf-FLZ"/>
    <property type="match status" value="1"/>
</dbReference>
<dbReference type="PROSITE" id="PS51795">
    <property type="entry name" value="ZF_FLZ"/>
    <property type="match status" value="1"/>
</dbReference>
<accession>F4JW68</accession>
<accession>Q52KA1</accession>
<evidence type="ECO:0000255" key="1">
    <source>
        <dbReference type="PROSITE-ProRule" id="PRU01131"/>
    </source>
</evidence>
<evidence type="ECO:0000269" key="2">
    <source>
    </source>
</evidence>
<evidence type="ECO:0000269" key="3">
    <source>
    </source>
</evidence>
<evidence type="ECO:0000269" key="4">
    <source>
    </source>
</evidence>
<evidence type="ECO:0000303" key="5">
    <source>
    </source>
</evidence>
<evidence type="ECO:0000303" key="6">
    <source>
    </source>
</evidence>
<evidence type="ECO:0000305" key="7"/>
<evidence type="ECO:0000312" key="8">
    <source>
        <dbReference type="Araport" id="AT4G39795"/>
    </source>
</evidence>
<evidence type="ECO:0000312" key="9">
    <source>
        <dbReference type="EMBL" id="AL022605"/>
    </source>
</evidence>
<evidence type="ECO:0000312" key="10">
    <source>
        <dbReference type="EMBL" id="AL035708"/>
    </source>
</evidence>
<name>FLZ7_ARATH</name>
<protein>
    <recommendedName>
        <fullName evidence="6">FCS-Like Zinc finger 7</fullName>
    </recommendedName>
</protein>
<reference key="1">
    <citation type="journal article" date="1999" name="Nature">
        <title>Sequence and analysis of chromosome 4 of the plant Arabidopsis thaliana.</title>
        <authorList>
            <person name="Mayer K.F.X."/>
            <person name="Schueller C."/>
            <person name="Wambutt R."/>
            <person name="Murphy G."/>
            <person name="Volckaert G."/>
            <person name="Pohl T."/>
            <person name="Duesterhoeft A."/>
            <person name="Stiekema W."/>
            <person name="Entian K.-D."/>
            <person name="Terryn N."/>
            <person name="Harris B."/>
            <person name="Ansorge W."/>
            <person name="Brandt P."/>
            <person name="Grivell L.A."/>
            <person name="Rieger M."/>
            <person name="Weichselgartner M."/>
            <person name="de Simone V."/>
            <person name="Obermaier B."/>
            <person name="Mache R."/>
            <person name="Mueller M."/>
            <person name="Kreis M."/>
            <person name="Delseny M."/>
            <person name="Puigdomenech P."/>
            <person name="Watson M."/>
            <person name="Schmidtheini T."/>
            <person name="Reichert B."/>
            <person name="Portetelle D."/>
            <person name="Perez-Alonso M."/>
            <person name="Boutry M."/>
            <person name="Bancroft I."/>
            <person name="Vos P."/>
            <person name="Hoheisel J."/>
            <person name="Zimmermann W."/>
            <person name="Wedler H."/>
            <person name="Ridley P."/>
            <person name="Langham S.-A."/>
            <person name="McCullagh B."/>
            <person name="Bilham L."/>
            <person name="Robben J."/>
            <person name="van der Schueren J."/>
            <person name="Grymonprez B."/>
            <person name="Chuang Y.-J."/>
            <person name="Vandenbussche F."/>
            <person name="Braeken M."/>
            <person name="Weltjens I."/>
            <person name="Voet M."/>
            <person name="Bastiaens I."/>
            <person name="Aert R."/>
            <person name="Defoor E."/>
            <person name="Weitzenegger T."/>
            <person name="Bothe G."/>
            <person name="Ramsperger U."/>
            <person name="Hilbert H."/>
            <person name="Braun M."/>
            <person name="Holzer E."/>
            <person name="Brandt A."/>
            <person name="Peters S."/>
            <person name="van Staveren M."/>
            <person name="Dirkse W."/>
            <person name="Mooijman P."/>
            <person name="Klein Lankhorst R."/>
            <person name="Rose M."/>
            <person name="Hauf J."/>
            <person name="Koetter P."/>
            <person name="Berneiser S."/>
            <person name="Hempel S."/>
            <person name="Feldpausch M."/>
            <person name="Lamberth S."/>
            <person name="Van den Daele H."/>
            <person name="De Keyser A."/>
            <person name="Buysshaert C."/>
            <person name="Gielen J."/>
            <person name="Villarroel R."/>
            <person name="De Clercq R."/>
            <person name="van Montagu M."/>
            <person name="Rogers J."/>
            <person name="Cronin A."/>
            <person name="Quail M.A."/>
            <person name="Bray-Allen S."/>
            <person name="Clark L."/>
            <person name="Doggett J."/>
            <person name="Hall S."/>
            <person name="Kay M."/>
            <person name="Lennard N."/>
            <person name="McLay K."/>
            <person name="Mayes R."/>
            <person name="Pettett A."/>
            <person name="Rajandream M.A."/>
            <person name="Lyne M."/>
            <person name="Benes V."/>
            <person name="Rechmann S."/>
            <person name="Borkova D."/>
            <person name="Bloecker H."/>
            <person name="Scharfe M."/>
            <person name="Grimm M."/>
            <person name="Loehnert T.-H."/>
            <person name="Dose S."/>
            <person name="de Haan M."/>
            <person name="Maarse A.C."/>
            <person name="Schaefer M."/>
            <person name="Mueller-Auer S."/>
            <person name="Gabel C."/>
            <person name="Fuchs M."/>
            <person name="Fartmann B."/>
            <person name="Granderath K."/>
            <person name="Dauner D."/>
            <person name="Herzl A."/>
            <person name="Neumann S."/>
            <person name="Argiriou A."/>
            <person name="Vitale D."/>
            <person name="Liguori R."/>
            <person name="Piravandi E."/>
            <person name="Massenet O."/>
            <person name="Quigley F."/>
            <person name="Clabauld G."/>
            <person name="Muendlein A."/>
            <person name="Felber R."/>
            <person name="Schnabl S."/>
            <person name="Hiller R."/>
            <person name="Schmidt W."/>
            <person name="Lecharny A."/>
            <person name="Aubourg S."/>
            <person name="Chefdor F."/>
            <person name="Cooke R."/>
            <person name="Berger C."/>
            <person name="Monfort A."/>
            <person name="Casacuberta E."/>
            <person name="Gibbons T."/>
            <person name="Weber N."/>
            <person name="Vandenbol M."/>
            <person name="Bargues M."/>
            <person name="Terol J."/>
            <person name="Torres A."/>
            <person name="Perez-Perez A."/>
            <person name="Purnelle B."/>
            <person name="Bent E."/>
            <person name="Johnson S."/>
            <person name="Tacon D."/>
            <person name="Jesse T."/>
            <person name="Heijnen L."/>
            <person name="Schwarz S."/>
            <person name="Scholler P."/>
            <person name="Heber S."/>
            <person name="Francs P."/>
            <person name="Bielke C."/>
            <person name="Frishman D."/>
            <person name="Haase D."/>
            <person name="Lemcke K."/>
            <person name="Mewes H.-W."/>
            <person name="Stocker S."/>
            <person name="Zaccaria P."/>
            <person name="Bevan M."/>
            <person name="Wilson R.K."/>
            <person name="de la Bastide M."/>
            <person name="Habermann K."/>
            <person name="Parnell L."/>
            <person name="Dedhia N."/>
            <person name="Gnoj L."/>
            <person name="Schutz K."/>
            <person name="Huang E."/>
            <person name="Spiegel L."/>
            <person name="Sekhon M."/>
            <person name="Murray J."/>
            <person name="Sheet P."/>
            <person name="Cordes M."/>
            <person name="Abu-Threideh J."/>
            <person name="Stoneking T."/>
            <person name="Kalicki J."/>
            <person name="Graves T."/>
            <person name="Harmon G."/>
            <person name="Edwards J."/>
            <person name="Latreille P."/>
            <person name="Courtney L."/>
            <person name="Cloud J."/>
            <person name="Abbott A."/>
            <person name="Scott K."/>
            <person name="Johnson D."/>
            <person name="Minx P."/>
            <person name="Bentley D."/>
            <person name="Fulton B."/>
            <person name="Miller N."/>
            <person name="Greco T."/>
            <person name="Kemp K."/>
            <person name="Kramer J."/>
            <person name="Fulton L."/>
            <person name="Mardis E."/>
            <person name="Dante M."/>
            <person name="Pepin K."/>
            <person name="Hillier L.W."/>
            <person name="Nelson J."/>
            <person name="Spieth J."/>
            <person name="Ryan E."/>
            <person name="Andrews S."/>
            <person name="Geisel C."/>
            <person name="Layman D."/>
            <person name="Du H."/>
            <person name="Ali J."/>
            <person name="Berghoff A."/>
            <person name="Jones K."/>
            <person name="Drone K."/>
            <person name="Cotton M."/>
            <person name="Joshu C."/>
            <person name="Antonoiu B."/>
            <person name="Zidanic M."/>
            <person name="Strong C."/>
            <person name="Sun H."/>
            <person name="Lamar B."/>
            <person name="Yordan C."/>
            <person name="Ma P."/>
            <person name="Zhong J."/>
            <person name="Preston R."/>
            <person name="Vil D."/>
            <person name="Shekher M."/>
            <person name="Matero A."/>
            <person name="Shah R."/>
            <person name="Swaby I.K."/>
            <person name="O'Shaughnessy A."/>
            <person name="Rodriguez M."/>
            <person name="Hoffman J."/>
            <person name="Till S."/>
            <person name="Granat S."/>
            <person name="Shohdy N."/>
            <person name="Hasegawa A."/>
            <person name="Hameed A."/>
            <person name="Lodhi M."/>
            <person name="Johnson A."/>
            <person name="Chen E."/>
            <person name="Marra M.A."/>
            <person name="Martienssen R."/>
            <person name="McCombie W.R."/>
        </authorList>
    </citation>
    <scope>NUCLEOTIDE SEQUENCE [LARGE SCALE GENOMIC DNA]</scope>
    <source>
        <strain>cv. Columbia</strain>
    </source>
</reference>
<reference key="2">
    <citation type="journal article" date="2017" name="Plant J.">
        <title>Araport11: a complete reannotation of the Arabidopsis thaliana reference genome.</title>
        <authorList>
            <person name="Cheng C.Y."/>
            <person name="Krishnakumar V."/>
            <person name="Chan A.P."/>
            <person name="Thibaud-Nissen F."/>
            <person name="Schobel S."/>
            <person name="Town C.D."/>
        </authorList>
    </citation>
    <scope>GENOME REANNOTATION</scope>
    <source>
        <strain>cv. Columbia</strain>
    </source>
</reference>
<reference key="3">
    <citation type="submission" date="2005-06" db="EMBL/GenBank/DDBJ databases">
        <title>Arabidopsis ORF clones.</title>
        <authorList>
            <person name="Kim C.J."/>
            <person name="Chen H."/>
            <person name="Cheuk R.F."/>
            <person name="Shinn P."/>
            <person name="Ecker J.R."/>
        </authorList>
    </citation>
    <scope>NUCLEOTIDE SEQUENCE [LARGE SCALE MRNA]</scope>
    <source>
        <strain>cv. Columbia</strain>
    </source>
</reference>
<reference key="4">
    <citation type="journal article" date="2014" name="Front. Plant Sci.">
        <title>The complex becomes more complex: protein-protein interactions of SnRK1 with DUF581 family proteins provide a framework for cell- and stimulus type-specific SnRK1 signaling in plants.</title>
        <authorList>
            <person name="Nietzsche M."/>
            <person name="Schiessl I."/>
            <person name="Boernke F."/>
        </authorList>
    </citation>
    <scope>GENE FAMILY</scope>
    <scope>INTERACTION WITH KIN10 AND KIN11</scope>
    <scope>FUNCTION</scope>
</reference>
<reference key="5">
    <citation type="journal article" date="2014" name="Front. Plant Sci.">
        <title>Corrigendum: The complex becomes more complex: protein-protein interactions of SnRK1 with DUF581 family proteins provide a framework for cell- and stimulus type-specific SnRK1 signaling in plants.</title>
        <authorList>
            <person name="Boernke F."/>
        </authorList>
    </citation>
    <scope>ERRATUM OF PUBMED:24600465</scope>
</reference>
<reference key="6">
    <citation type="journal article" date="2014" name="PLoS ONE">
        <title>DUF581 is plant specific FCS-like zinc finger involved in protein-protein interaction.</title>
        <authorList>
            <person name="Jamsheer K M."/>
            <person name="Laxmi A."/>
        </authorList>
    </citation>
    <scope>GENE FAMILY</scope>
    <scope>NOMENCLATURE</scope>
</reference>
<reference key="7">
    <citation type="journal article" date="2015" name="Front. Plant Sci.">
        <title>Expression of Arabidopsis FCS-Like Zinc finger genes is differentially regulated by sugars, cellular energy level, and abiotic stress.</title>
        <authorList>
            <person name="Jamsheer K M."/>
            <person name="Laxmi A."/>
        </authorList>
    </citation>
    <scope>INDUCTION</scope>
</reference>
<reference key="8">
    <citation type="journal article" date="2018" name="J. Biol. Chem.">
        <title>The FCS-like zinc finger scaffold of the kinase SnRK1 is formed by the coordinated actions of the FLZ domain and intrinsically disordered regions.</title>
        <authorList>
            <person name="Jamsheer K M."/>
            <person name="Shukla B.N."/>
            <person name="Jindal S."/>
            <person name="Gopan N."/>
            <person name="Mannully C.T."/>
            <person name="Laxmi A."/>
        </authorList>
    </citation>
    <scope>INTERACTION WITH KIN10; KIN11 AND KINB3</scope>
    <scope>SUBUNIT</scope>
    <scope>SUBCELLULAR LOCATION</scope>
</reference>